<dbReference type="EC" id="3.2.1.117"/>
<dbReference type="CAZy" id="GH1">
    <property type="family name" value="Glycoside Hydrolase Family 1"/>
</dbReference>
<dbReference type="GO" id="GO:0047668">
    <property type="term" value="F:amygdalin beta-glucosidase activity"/>
    <property type="evidence" value="ECO:0007669"/>
    <property type="project" value="UniProtKB-EC"/>
</dbReference>
<accession>P29259</accession>
<comment type="catalytic activity">
    <reaction>
        <text>(R)-amygdalin + H2O = (R)-prunasin + D-glucose</text>
        <dbReference type="Rhea" id="RHEA:14177"/>
        <dbReference type="ChEBI" id="CHEBI:4167"/>
        <dbReference type="ChEBI" id="CHEBI:15377"/>
        <dbReference type="ChEBI" id="CHEBI:17019"/>
        <dbReference type="ChEBI" id="CHEBI:17396"/>
        <dbReference type="EC" id="3.2.1.117"/>
    </reaction>
</comment>
<comment type="subunit">
    <text>Monomer.</text>
</comment>
<comment type="developmental stage">
    <text>Absent from maturing black cherry fruits until 6 weeks after flowering. Then, concomitant with cotyledon development, the level of enzyme increases with specificity for embryonal tissues.</text>
</comment>
<comment type="PTM">
    <text>Glycosylated.</text>
</comment>
<reference key="1">
    <citation type="journal article" date="1992" name="Plant Physiol.">
        <title>Prunus serotina amygdalin hydrolase and prunasin hydrolase: purification, N-terminal sequencing, and antibody production.</title>
        <authorList>
            <person name="Li C.P."/>
            <person name="Swain E."/>
            <person name="Poulton J.E."/>
        </authorList>
    </citation>
    <scope>PROTEIN SEQUENCE</scope>
    <source>
        <tissue>Seed</tissue>
    </source>
</reference>
<proteinExistence type="evidence at protein level"/>
<protein>
    <recommendedName>
        <fullName>Amygdalin beta-glucosidase 1</fullName>
        <ecNumber>3.2.1.117</ecNumber>
    </recommendedName>
    <alternativeName>
        <fullName>Amygdalin beta-glucosidase I</fullName>
    </alternativeName>
    <alternativeName>
        <fullName>Amygdalin hydrolase isozyme I</fullName>
        <shortName>AH I</shortName>
    </alternativeName>
</protein>
<name>AH1_PRUSE</name>
<organism>
    <name type="scientific">Prunus serotina</name>
    <name type="common">Black cherry</name>
    <dbReference type="NCBI Taxonomy" id="23207"/>
    <lineage>
        <taxon>Eukaryota</taxon>
        <taxon>Viridiplantae</taxon>
        <taxon>Streptophyta</taxon>
        <taxon>Embryophyta</taxon>
        <taxon>Tracheophyta</taxon>
        <taxon>Spermatophyta</taxon>
        <taxon>Magnoliopsida</taxon>
        <taxon>eudicotyledons</taxon>
        <taxon>Gunneridae</taxon>
        <taxon>Pentapetalae</taxon>
        <taxon>rosids</taxon>
        <taxon>fabids</taxon>
        <taxon>Rosales</taxon>
        <taxon>Rosaceae</taxon>
        <taxon>Amygdaloideae</taxon>
        <taxon>Amygdaleae</taxon>
        <taxon>Prunus</taxon>
    </lineage>
</organism>
<sequence>AKTDPPIHCASLXRSS</sequence>
<keyword id="KW-0903">Direct protein sequencing</keyword>
<keyword id="KW-0325">Glycoprotein</keyword>
<keyword id="KW-0326">Glycosidase</keyword>
<keyword id="KW-0378">Hydrolase</keyword>
<feature type="chain" id="PRO_0000064498" description="Amygdalin beta-glucosidase 1">
    <location>
        <begin position="1"/>
        <end position="16" status="greater than"/>
    </location>
</feature>
<feature type="non-terminal residue">
    <location>
        <position position="16"/>
    </location>
</feature>